<protein>
    <recommendedName>
        <fullName evidence="3">Basic phospholipase A2 homolog MitTx-beta</fullName>
        <shortName evidence="4">svPLA2 homolog</shortName>
    </recommendedName>
</protein>
<evidence type="ECO:0000269" key="1">
    <source>
    </source>
</evidence>
<evidence type="ECO:0000269" key="2">
    <source>
    </source>
</evidence>
<evidence type="ECO:0000303" key="3">
    <source>
    </source>
</evidence>
<evidence type="ECO:0000305" key="4"/>
<evidence type="ECO:0000305" key="5">
    <source>
    </source>
</evidence>
<evidence type="ECO:0000312" key="6">
    <source>
        <dbReference type="PDB" id="4NTW"/>
    </source>
</evidence>
<evidence type="ECO:0000312" key="7">
    <source>
        <dbReference type="PDB" id="4NTX"/>
    </source>
</evidence>
<evidence type="ECO:0000312" key="8">
    <source>
        <dbReference type="PDB" id="4NTY"/>
    </source>
</evidence>
<evidence type="ECO:0007829" key="9">
    <source>
        <dbReference type="PDB" id="4NTW"/>
    </source>
</evidence>
<evidence type="ECO:0007829" key="10">
    <source>
        <dbReference type="PDB" id="4NTX"/>
    </source>
</evidence>
<organism>
    <name type="scientific">Micrurus tener tener</name>
    <name type="common">Texas coral snake</name>
    <dbReference type="NCBI Taxonomy" id="1114302"/>
    <lineage>
        <taxon>Eukaryota</taxon>
        <taxon>Metazoa</taxon>
        <taxon>Chordata</taxon>
        <taxon>Craniata</taxon>
        <taxon>Vertebrata</taxon>
        <taxon>Euteleostomi</taxon>
        <taxon>Lepidosauria</taxon>
        <taxon>Squamata</taxon>
        <taxon>Bifurcata</taxon>
        <taxon>Unidentata</taxon>
        <taxon>Episquamata</taxon>
        <taxon>Toxicofera</taxon>
        <taxon>Serpentes</taxon>
        <taxon>Colubroidea</taxon>
        <taxon>Elapidae</taxon>
        <taxon>Elapinae</taxon>
        <taxon>Micrurus</taxon>
    </lineage>
</organism>
<feature type="signal peptide" evidence="1">
    <location>
        <begin position="1"/>
        <end position="30"/>
    </location>
</feature>
<feature type="chain" id="PRO_5000828218" description="Basic phospholipase A2 homolog MitTx-beta" evidence="5">
    <location>
        <begin position="31"/>
        <end position="149"/>
    </location>
</feature>
<feature type="disulfide bond" evidence="2 6 7 8">
    <location>
        <begin position="41"/>
        <end position="100"/>
    </location>
</feature>
<feature type="disulfide bond" evidence="2 6 7 8">
    <location>
        <begin position="55"/>
        <end position="148"/>
    </location>
</feature>
<feature type="disulfide bond" evidence="2 6 7 8">
    <location>
        <begin position="57"/>
        <end position="73"/>
    </location>
</feature>
<feature type="disulfide bond" evidence="2 6 7 8">
    <location>
        <begin position="72"/>
        <end position="130"/>
    </location>
</feature>
<feature type="disulfide bond" evidence="2 6 7 8">
    <location>
        <begin position="79"/>
        <end position="123"/>
    </location>
</feature>
<feature type="disulfide bond" evidence="2 6 7 8">
    <location>
        <begin position="89"/>
        <end position="116"/>
    </location>
</feature>
<feature type="disulfide bond" evidence="2 6 7 8">
    <location>
        <begin position="109"/>
        <end position="121"/>
    </location>
</feature>
<feature type="helix" evidence="9">
    <location>
        <begin position="32"/>
        <end position="40"/>
    </location>
</feature>
<feature type="helix" evidence="9">
    <location>
        <begin position="47"/>
        <end position="49"/>
    </location>
</feature>
<feature type="turn" evidence="9">
    <location>
        <begin position="50"/>
        <end position="52"/>
    </location>
</feature>
<feature type="turn" evidence="9">
    <location>
        <begin position="54"/>
        <end position="56"/>
    </location>
</feature>
<feature type="helix" evidence="9">
    <location>
        <begin position="68"/>
        <end position="87"/>
    </location>
</feature>
<feature type="turn" evidence="9">
    <location>
        <begin position="91"/>
        <end position="93"/>
    </location>
</feature>
<feature type="helix" evidence="9">
    <location>
        <begin position="104"/>
        <end position="106"/>
    </location>
</feature>
<feature type="helix" evidence="9">
    <location>
        <begin position="115"/>
        <end position="133"/>
    </location>
</feature>
<feature type="helix" evidence="10">
    <location>
        <begin position="138"/>
        <end position="140"/>
    </location>
</feature>
<feature type="helix" evidence="9">
    <location>
        <begin position="145"/>
        <end position="147"/>
    </location>
</feature>
<reference key="1">
    <citation type="journal article" date="2011" name="Nature">
        <title>A heteromeric Texas coral snake toxin targets acid-sensing ion channels to produce pain.</title>
        <authorList>
            <person name="Bohlen C.J."/>
            <person name="Chesler A.T."/>
            <person name="Sharif-Naeini R."/>
            <person name="Medzihradszky K.F."/>
            <person name="Zhou S."/>
            <person name="King D."/>
            <person name="Sanchez E.E."/>
            <person name="Burlingame A.L."/>
            <person name="Basbaum A.I."/>
            <person name="Julius D."/>
        </authorList>
    </citation>
    <scope>NUCLEOTIDE SEQUENCE [MRNA]</scope>
    <scope>PROTEIN SEQUENCE OF 31-46</scope>
    <scope>FUNCTION</scope>
    <scope>SUBUNIT</scope>
    <scope>3D-STRUCTURE MODELING</scope>
    <scope>SUBCELLULAR LOCATION</scope>
    <source>
        <tissue>Venom</tissue>
        <tissue>Venom gland</tissue>
    </source>
</reference>
<reference key="2">
    <citation type="journal article" date="2014" name="Cell">
        <title>X-ray structure of acid-sensing ion channel 1-snake toxin complex reveals open state of a Na(+)-selective channel.</title>
        <authorList>
            <person name="Baconguis I."/>
            <person name="Bohlen C.J."/>
            <person name="Goehring A."/>
            <person name="Julius D."/>
            <person name="Gouaux E."/>
        </authorList>
    </citation>
    <scope>X-RAY CRYSTALLOGRAPHY (2.07 ANGSTROMS) OF 31-148 IN COMPLEX MITTX-ALPHA AND THE CHICKEN ASIC1 IN AN OPEN STATE</scope>
    <scope>DISULFIDE BONDS</scope>
    <scope>FUNCTION</scope>
</reference>
<accession>G9I930</accession>
<keyword id="KW-0002">3D-structure</keyword>
<keyword id="KW-0903">Direct protein sequencing</keyword>
<keyword id="KW-1015">Disulfide bond</keyword>
<keyword id="KW-0872">Ion channel impairing toxin</keyword>
<keyword id="KW-1275">Proton-gated sodium channel impairing toxin</keyword>
<keyword id="KW-0964">Secreted</keyword>
<keyword id="KW-0732">Signal</keyword>
<keyword id="KW-0800">Toxin</keyword>
<name>PA2HB_MICTN</name>
<comment type="function">
    <text evidence="1 2">Heterodimer: MitTx, a heteromeric complex between Kunitz- and phospholipase-A2-like proteins, potently, persistently and selectively activates rat and chicken acid-sensing ion channel ASIC1 (PubMed:22094702, PubMed:24507937). Both alternatively spliced rat isoforms ASIC1a and ASIC1b are activated, with a higher potency for ASIC1a (EC(50)=9.4 nM) vs ASIC1b (EC(50)=23 nM) (PubMed:22094702). The rat ASIC3 subtype is also sensitive to the heterodimer, but with a lower potency (EC(50)=830 nM) (PubMed:22094702). On rat ASIC2a, the toxin shows a very weak activation, but produces a remarkable potentiation (&gt;100-fold) of protons when the extracellular pH drops below neutrality (PubMed:22094702). Moderate and weak activations are also observed on the heterotrimers Asic1a-Asic2a and Asic1a-Asic3 (expressed in CHO cells), respectively (PubMed:22094702). The binding sites of the beta subunit of MitTx and the spider psalmotoxin-1 toxin overlap, explaining why these toxins are mutually exclusive (PubMed:22094702, PubMed:24507937). In vivo, the heterodimer elicits robust pain-related behavior in mice by activation of ASIC1 channels on capsaicin-sensitive nerve fibers (PubMed:22094702).</text>
</comment>
<comment type="function">
    <text evidence="5">Monomer: does not have phospholipase A2 activity but may maintain some lipid-binding character from its PLA2 lineage, which could aid in effecting neuronal depolarization.</text>
</comment>
<comment type="subunit">
    <text evidence="1">Heterodimer of an alpha (Kunitz-type) and a beta (phospholipase A2 homolog) chains; non-covalently-linked.</text>
</comment>
<comment type="subcellular location">
    <subcellularLocation>
        <location evidence="1">Secreted</location>
    </subcellularLocation>
</comment>
<comment type="tissue specificity">
    <text evidence="5">Expressed by the venom gland.</text>
</comment>
<comment type="domain">
    <text evidence="2">The toxin-channel complex has a triskelion-like shape with one toxin heterodimer radiating from each ASIC1 subunit. Toxin subunits protrude from the edges of the channel trimer, with each heterodimer interacting almost exclusively with a single subunit.</text>
</comment>
<comment type="miscellaneous">
    <text evidence="5">Negative results: the heterodimeric toxin does not affect ASIC2b, ASIC4, Kv2.1/KCNB1, Cav3.3/CACNA1I, ENaC alpha/beta/gamma (SCNN1A/SCNN1B/SCNN1G), TRPA1, TRPV1, TRPV3, TRPM8, P2X2/P2RX2, and 5-HT3/HTR3A channels.</text>
</comment>
<comment type="similarity">
    <text evidence="4">Belongs to the phospholipase A2 family. Group I subfamily. K49 sub-subfamily.</text>
</comment>
<comment type="caution">
    <text evidence="4">Does not bind calcium as one of the calcium-binding sites is lost (Asp-&gt;Lys in position 77, which corresponds to 'Lys-49' in the current nomenclature).</text>
</comment>
<comment type="online information" name="Protein Spotlight">
    <link uri="https://www.proteinspotlight.org/back_issues/140"/>
    <text>The poison in pain - Issue 140 of July 2012</text>
</comment>
<sequence length="149" mass="16793">MDKMNPAHLLVLAAVCVSLLGASSIPPQALNLNQFRLMIKCTNDRVWADFVDYGCYCVARDSNTPVDDLDRCCQAQKQCYDEAVKVHGCKPLVMFYSFECRYLASDLDCSGNNTKCRNFVCNCDRTATLCILTATYNRNNHKIDPSRCQ</sequence>
<proteinExistence type="evidence at protein level"/>
<dbReference type="EMBL" id="JN613326">
    <property type="protein sequence ID" value="AET85560.1"/>
    <property type="molecule type" value="mRNA"/>
</dbReference>
<dbReference type="PDB" id="4NTW">
    <property type="method" value="X-ray"/>
    <property type="resolution" value="2.07 A"/>
    <property type="chains" value="C=31-148"/>
</dbReference>
<dbReference type="PDB" id="4NTX">
    <property type="method" value="X-ray"/>
    <property type="resolution" value="2.27 A"/>
    <property type="chains" value="C=31-148"/>
</dbReference>
<dbReference type="PDB" id="4NTY">
    <property type="method" value="X-ray"/>
    <property type="resolution" value="2.65 A"/>
    <property type="chains" value="C=31-148"/>
</dbReference>
<dbReference type="PDBsum" id="4NTW"/>
<dbReference type="PDBsum" id="4NTX"/>
<dbReference type="PDBsum" id="4NTY"/>
<dbReference type="SMR" id="G9I930"/>
<dbReference type="EvolutionaryTrace" id="G9I930"/>
<dbReference type="GO" id="GO:0005576">
    <property type="term" value="C:extracellular region"/>
    <property type="evidence" value="ECO:0007669"/>
    <property type="project" value="UniProtKB-SubCell"/>
</dbReference>
<dbReference type="GO" id="GO:0005509">
    <property type="term" value="F:calcium ion binding"/>
    <property type="evidence" value="ECO:0007669"/>
    <property type="project" value="InterPro"/>
</dbReference>
<dbReference type="GO" id="GO:0047498">
    <property type="term" value="F:calcium-dependent phospholipase A2 activity"/>
    <property type="evidence" value="ECO:0007669"/>
    <property type="project" value="TreeGrafter"/>
</dbReference>
<dbReference type="GO" id="GO:0099106">
    <property type="term" value="F:ion channel regulator activity"/>
    <property type="evidence" value="ECO:0007669"/>
    <property type="project" value="UniProtKB-KW"/>
</dbReference>
<dbReference type="GO" id="GO:0005543">
    <property type="term" value="F:phospholipid binding"/>
    <property type="evidence" value="ECO:0007669"/>
    <property type="project" value="TreeGrafter"/>
</dbReference>
<dbReference type="GO" id="GO:0090729">
    <property type="term" value="F:toxin activity"/>
    <property type="evidence" value="ECO:0007669"/>
    <property type="project" value="UniProtKB-KW"/>
</dbReference>
<dbReference type="GO" id="GO:0050482">
    <property type="term" value="P:arachidonate secretion"/>
    <property type="evidence" value="ECO:0007669"/>
    <property type="project" value="InterPro"/>
</dbReference>
<dbReference type="GO" id="GO:0016042">
    <property type="term" value="P:lipid catabolic process"/>
    <property type="evidence" value="ECO:0007669"/>
    <property type="project" value="InterPro"/>
</dbReference>
<dbReference type="GO" id="GO:0006644">
    <property type="term" value="P:phospholipid metabolic process"/>
    <property type="evidence" value="ECO:0007669"/>
    <property type="project" value="InterPro"/>
</dbReference>
<dbReference type="CDD" id="cd00125">
    <property type="entry name" value="PLA2c"/>
    <property type="match status" value="1"/>
</dbReference>
<dbReference type="Gene3D" id="1.20.90.10">
    <property type="entry name" value="Phospholipase A2 domain"/>
    <property type="match status" value="1"/>
</dbReference>
<dbReference type="InterPro" id="IPR001211">
    <property type="entry name" value="PLipase_A2"/>
</dbReference>
<dbReference type="InterPro" id="IPR033112">
    <property type="entry name" value="PLipase_A2_Asp_AS"/>
</dbReference>
<dbReference type="InterPro" id="IPR016090">
    <property type="entry name" value="PLipase_A2_dom"/>
</dbReference>
<dbReference type="InterPro" id="IPR036444">
    <property type="entry name" value="PLipase_A2_dom_sf"/>
</dbReference>
<dbReference type="PANTHER" id="PTHR11716:SF94">
    <property type="entry name" value="PHOSPHOLIPASE A2"/>
    <property type="match status" value="1"/>
</dbReference>
<dbReference type="PANTHER" id="PTHR11716">
    <property type="entry name" value="PHOSPHOLIPASE A2 FAMILY MEMBER"/>
    <property type="match status" value="1"/>
</dbReference>
<dbReference type="Pfam" id="PF00068">
    <property type="entry name" value="Phospholip_A2_1"/>
    <property type="match status" value="1"/>
</dbReference>
<dbReference type="PRINTS" id="PR00389">
    <property type="entry name" value="PHPHLIPASEA2"/>
</dbReference>
<dbReference type="SMART" id="SM00085">
    <property type="entry name" value="PA2c"/>
    <property type="match status" value="1"/>
</dbReference>
<dbReference type="SUPFAM" id="SSF48619">
    <property type="entry name" value="Phospholipase A2, PLA2"/>
    <property type="match status" value="1"/>
</dbReference>
<dbReference type="PROSITE" id="PS00119">
    <property type="entry name" value="PA2_ASP"/>
    <property type="match status" value="1"/>
</dbReference>